<protein>
    <recommendedName>
        <fullName evidence="27">G1/S-specific cyclin-D1</fullName>
    </recommendedName>
    <alternativeName>
        <fullName evidence="26">B-cell lymphoma 1 protein</fullName>
        <shortName evidence="26">BCL-1</shortName>
    </alternativeName>
    <alternativeName>
        <fullName evidence="26">BCL-1 oncogene</fullName>
    </alternativeName>
    <alternativeName>
        <fullName evidence="26">PRAD1 oncogene</fullName>
    </alternativeName>
</protein>
<keyword id="KW-0002">3D-structure</keyword>
<keyword id="KW-0131">Cell cycle</keyword>
<keyword id="KW-0132">Cell division</keyword>
<keyword id="KW-0160">Chromosomal rearrangement</keyword>
<keyword id="KW-0195">Cyclin</keyword>
<keyword id="KW-0963">Cytoplasm</keyword>
<keyword id="KW-0227">DNA damage</keyword>
<keyword id="KW-1017">Isopeptide bond</keyword>
<keyword id="KW-0472">Membrane</keyword>
<keyword id="KW-0539">Nucleus</keyword>
<keyword id="KW-0597">Phosphoprotein</keyword>
<keyword id="KW-1267">Proteomics identification</keyword>
<keyword id="KW-0656">Proto-oncogene</keyword>
<keyword id="KW-1185">Reference proteome</keyword>
<keyword id="KW-0678">Repressor</keyword>
<keyword id="KW-0804">Transcription</keyword>
<keyword id="KW-0805">Transcription regulation</keyword>
<keyword id="KW-0832">Ubl conjugation</keyword>
<sequence length="295" mass="33729">MEHQLLCCEVETIRRAYPDANLLNDRVLRAMLKAEETCAPSVSYFKCVQKEVLPSMRKIVATWMLEVCEEQKCEEEVFPLAMNYLDRFLSLEPVKKSRLQLLGATCMFVASKMKETIPLTAEKLCIYTDNSIRPEELLQMELLLVNKLKWNLAAMTPHDFIEHFLSKMPEAEENKQIIRKHAQTFVALCATDVKFISNPPSMVAAGSVVAAVQGLNLRSPNNFLSYYRLTRFLSRVIKCDPDCLRACQEQIEALLESSLRQAQQNMDPKAAEEEEEEEEEVDLACTPTDVRDVDI</sequence>
<name>CCND1_HUMAN</name>
<proteinExistence type="evidence at protein level"/>
<accession>P24385</accession>
<accession>Q6LEF0</accession>
<reference key="1">
    <citation type="journal article" date="1991" name="Nature">
        <title>A novel cyclin encoded by a bcl1-linked candidate oncogene.</title>
        <authorList>
            <person name="Motokura T."/>
            <person name="Bloom T."/>
            <person name="Kim H.G."/>
            <person name="Jueppner H."/>
            <person name="Ruderman J.V."/>
            <person name="Kronenberg H.M."/>
            <person name="Arnold A."/>
        </authorList>
    </citation>
    <scope>NUCLEOTIDE SEQUENCE [MRNA]</scope>
</reference>
<reference key="2">
    <citation type="journal article" date="1991" name="Cell">
        <title>Isolation of three novel human cyclins by rescue of G1 cyclin (Cln) function in yeast.</title>
        <authorList>
            <person name="Lew D.J."/>
            <person name="Dulic V."/>
            <person name="Reed S.I."/>
        </authorList>
    </citation>
    <scope>NUCLEOTIDE SEQUENCE [MRNA]</scope>
    <scope>FUNCTION</scope>
</reference>
<reference key="3">
    <citation type="journal article" date="1991" name="Cell">
        <title>Human D-type cyclin.</title>
        <authorList>
            <person name="Xiong Y."/>
            <person name="Connolly T."/>
            <person name="Futcher B."/>
            <person name="Beach D."/>
        </authorList>
    </citation>
    <scope>NUCLEOTIDE SEQUENCE [MRNA]</scope>
    <scope>FUNCTION</scope>
</reference>
<reference key="4">
    <citation type="journal article" date="1991" name="Mol. Cell. Biol.">
        <title>Characterization of a candidate bcl-1 gene.</title>
        <authorList>
            <person name="Withers D.A."/>
            <person name="Harvey R.C."/>
            <person name="Faust J.B."/>
            <person name="Melnyk O."/>
            <person name="Carey K."/>
            <person name="Meeker T.C."/>
        </authorList>
    </citation>
    <scope>NUCLEOTIDE SEQUENCE [MRNA]</scope>
</reference>
<reference key="5">
    <citation type="journal article" date="1994" name="Blood">
        <title>Rearrangement of CCND1 (BCL1/PRAD1) 3' untranslated region in mantle-cell lymphomas and t(11q13)-associated leukemias.</title>
        <authorList>
            <person name="Rimokh R."/>
            <person name="Berger F."/>
            <person name="Bastard C."/>
            <person name="Klein B."/>
            <person name="French M."/>
            <person name="Archimbaud E."/>
            <person name="Rouault J.-P."/>
            <person name="Santa Lucia B."/>
            <person name="Duret L."/>
            <person name="Vuillaume M."/>
        </authorList>
    </citation>
    <scope>NUCLEOTIDE SEQUENCE [MRNA]</scope>
</reference>
<reference key="6">
    <citation type="submission" date="2003-05" db="EMBL/GenBank/DDBJ databases">
        <title>Cloning of human full-length CDSs in BD Creator(TM) system donor vector.</title>
        <authorList>
            <person name="Kalnine N."/>
            <person name="Chen X."/>
            <person name="Rolfs A."/>
            <person name="Halleck A."/>
            <person name="Hines L."/>
            <person name="Eisenstein S."/>
            <person name="Koundinya M."/>
            <person name="Raphael J."/>
            <person name="Moreira D."/>
            <person name="Kelley T."/>
            <person name="LaBaer J."/>
            <person name="Lin Y."/>
            <person name="Phelan M."/>
            <person name="Farmer A."/>
        </authorList>
    </citation>
    <scope>NUCLEOTIDE SEQUENCE [LARGE SCALE MRNA]</scope>
</reference>
<reference key="7">
    <citation type="submission" date="2002-09" db="EMBL/GenBank/DDBJ databases">
        <authorList>
            <consortium name="NIEHS SNPs program"/>
        </authorList>
    </citation>
    <scope>NUCLEOTIDE SEQUENCE [GENOMIC DNA]</scope>
</reference>
<reference key="8">
    <citation type="journal article" date="2004" name="Genome Res.">
        <title>The status, quality, and expansion of the NIH full-length cDNA project: the Mammalian Gene Collection (MGC).</title>
        <authorList>
            <consortium name="The MGC Project Team"/>
        </authorList>
    </citation>
    <scope>NUCLEOTIDE SEQUENCE [LARGE SCALE MRNA]</scope>
    <source>
        <tissue>Brain</tissue>
        <tissue>Placenta</tissue>
    </source>
</reference>
<reference key="9">
    <citation type="journal article" date="1993" name="Genes Chromosomes Cancer">
        <title>The PRAD1/cyclin D1 proto-oncogene: genomic organization, 5' DNA sequence, and sequence of a tumor-specific rearrangement breakpoint.</title>
        <authorList>
            <person name="Motokura T."/>
            <person name="Arnold A."/>
        </authorList>
    </citation>
    <scope>NUCLEOTIDE SEQUENCE [GENOMIC DNA] OF 1-66</scope>
    <source>
        <tissue>Placenta</tissue>
    </source>
</reference>
<reference key="10">
    <citation type="journal article" date="1994" name="Mol. Cell. Biol.">
        <title>Identification of G1 kinase activity for cdk6, a novel cyclin D partner.</title>
        <authorList>
            <person name="Meyerson M."/>
            <person name="Harlow E."/>
        </authorList>
    </citation>
    <scope>FUNCTION</scope>
    <scope>INTERACTION WITH CDK6</scope>
</reference>
<reference key="11">
    <citation type="journal article" date="1994" name="Oncogene">
        <title>CDK6 (PLSTIRE) and CDK4 (PSK-J3) are a distinct subset of the cyclin-dependent kinases that associate with cyclin D1.</title>
        <authorList>
            <person name="Bates S."/>
            <person name="Bonetta L."/>
            <person name="McAllan D."/>
            <person name="Parry D."/>
            <person name="Holder A."/>
            <person name="Dickson C."/>
            <person name="Peters G."/>
        </authorList>
    </citation>
    <scope>FUNCTION</scope>
    <scope>INTERACTION WITH CDK4 AND CDK6</scope>
</reference>
<reference key="12">
    <citation type="journal article" date="1996" name="Blood">
        <title>Dysregulation of cyclin D1 by translocation into an IgH gamma switch region in two multiple myeloma cell lines.</title>
        <authorList>
            <person name="Chesi M."/>
            <person name="Bergsagel P.L."/>
            <person name="Brents L.A."/>
            <person name="Smith C.M."/>
            <person name="Gerhard D.S."/>
            <person name="Kuehl W.M."/>
        </authorList>
    </citation>
    <scope>INVOLVEMENT IN MULTIPLE MYELOMA</scope>
</reference>
<reference key="13">
    <citation type="journal article" date="1997" name="Genes Dev.">
        <title>New functional activities for the p21 family of CDK inhibitors.</title>
        <authorList>
            <person name="LaBaer J."/>
            <person name="Garrett M.D."/>
            <person name="Stevenson L.F."/>
            <person name="Slingerland J.M."/>
            <person name="Sandhu C."/>
            <person name="Chou H.S."/>
            <person name="Fattaey A."/>
            <person name="Harlow E."/>
        </authorList>
    </citation>
    <scope>INTERACTION WITH CDK4 IN THE CCND1-CDK4-CDKN COMPLEX</scope>
    <scope>SUBCELLULAR LOCATION</scope>
    <scope>FUNCTION</scope>
</reference>
<reference key="14">
    <citation type="journal article" date="2000" name="J. Biol. Chem.">
        <title>Ubiquitination of free cyclin D1 is independent of phosphorylation on threonine 286.</title>
        <authorList>
            <person name="Germain D."/>
            <person name="Russell A."/>
            <person name="Thompson A."/>
            <person name="Hendley J."/>
        </authorList>
    </citation>
    <scope>UBIQUITINATION</scope>
    <scope>MUTAGENESIS OF THR-286 AND THR-288</scope>
</reference>
<reference key="15">
    <citation type="journal article" date="2004" name="Nature">
        <title>Cyclin-dependent kinases regulate the antiproliferative function of Smads.</title>
        <authorList>
            <person name="Matsuura I."/>
            <person name="Denissova N.G."/>
            <person name="Wang G."/>
            <person name="He D."/>
            <person name="Long J."/>
            <person name="Liu F."/>
        </authorList>
    </citation>
    <scope>FUNCTION OF CCND1-CDK4 COMPLEX IN SMAD PHOSPHORYLATION</scope>
</reference>
<reference key="16">
    <citation type="journal article" date="2006" name="Biochem. J.">
        <title>INSM1 functions as a transcriptional repressor of the neuroD/beta2 gene through the recruitment of cyclin D1 and histone deacetylases.</title>
        <authorList>
            <person name="Liu W.D."/>
            <person name="Wang H.W."/>
            <person name="Muguira M."/>
            <person name="Breslin M.B."/>
            <person name="Lan M.S."/>
        </authorList>
    </citation>
    <scope>FUNCTION</scope>
    <scope>INTERACTION WITH INSM1</scope>
</reference>
<reference key="17">
    <citation type="journal article" date="2008" name="J. Endocrinol.">
        <title>Identification of an INSM1-binding site in the insulin promoter: negative regulation of the insulin gene transcription.</title>
        <authorList>
            <person name="Wang H.W."/>
            <person name="Muguira M."/>
            <person name="Liu W.D."/>
            <person name="Zhang T."/>
            <person name="Chen C."/>
            <person name="Aucoin R."/>
            <person name="Breslin M.B."/>
            <person name="Lan M.S."/>
        </authorList>
    </citation>
    <scope>FUNCTION</scope>
    <scope>INTERACTION WITH INSM1</scope>
</reference>
<reference key="18">
    <citation type="journal article" date="2009" name="J. Biol. Chem.">
        <title>Zinc finger transcription factor INSM1 interrupts cyclin D1 and CDK4 binding and induces cell cycle arrest.</title>
        <authorList>
            <person name="Zhang T."/>
            <person name="Liu W.D."/>
            <person name="Saunee N.A."/>
            <person name="Breslin M.B."/>
            <person name="Lan M.S."/>
        </authorList>
    </citation>
    <scope>INTERACTION WITH INSM1 AND CDK4</scope>
</reference>
<reference key="19">
    <citation type="journal article" date="2009" name="Mol. Cell">
        <title>Suppression of cancer cell growth by promoting cyclin D1 degradation.</title>
        <authorList>
            <person name="Shan J."/>
            <person name="Zhao W."/>
            <person name="Gu W."/>
        </authorList>
    </citation>
    <scope>INTERACTION WITH USP2</scope>
    <scope>UBIQUITINATION</scope>
    <scope>DEUBIQUITINATION BY USP2</scope>
</reference>
<reference key="20">
    <citation type="journal article" date="2009" name="Nature">
        <title>F-box protein FBXO31 mediates cyclin D1 degradation to induce G1 arrest after DNA damage.</title>
        <authorList>
            <person name="Santra M.K."/>
            <person name="Wajapeyee N."/>
            <person name="Green M.R."/>
        </authorList>
    </citation>
    <scope>FUNCTION</scope>
    <scope>PHOSPHORYLATION AT THR-286</scope>
    <scope>UBIQUITINATION</scope>
    <scope>MUTAGENESIS OF THR-286</scope>
</reference>
<reference key="21">
    <citation type="journal article" date="2010" name="Biochim. Biophys. Acta">
        <title>TM4SF5 accelerates G1/S phase progression via cytosolic p27Kip1 expression and RhoA activity.</title>
        <authorList>
            <person name="Kim H."/>
            <person name="Kang M."/>
            <person name="Lee S.A."/>
            <person name="Kwak T.K."/>
            <person name="Jung O."/>
            <person name="Lee H.J."/>
            <person name="Kim S.H."/>
            <person name="Lee J.W."/>
        </authorList>
    </citation>
    <scope>SUBCELLULAR LOCATION</scope>
    <scope>INTERACTION WITH CDK4</scope>
</reference>
<reference key="22">
    <citation type="journal article" date="2011" name="Cell Cycle">
        <title>NIRF constitutes a nodal point in the cell cycle network and is a candidate tumor suppressor.</title>
        <authorList>
            <person name="Mori T."/>
            <person name="Ikeda D.D."/>
            <person name="Fukushima T."/>
            <person name="Takenoshita S."/>
            <person name="Kochi H."/>
        </authorList>
    </citation>
    <scope>UBIQUITINATION</scope>
    <scope>INTERACTION WITH UHRF2</scope>
</reference>
<reference key="23">
    <citation type="journal article" date="2006" name="PLoS ONE">
        <title>A critical role for FBXW8 and MAPK in cyclin D1 degradation and cancer cell proliferation.</title>
        <authorList>
            <person name="Okabe H."/>
            <person name="Lee S.H."/>
            <person name="Phuchareon J."/>
            <person name="Albertson D.G."/>
            <person name="McCormick F."/>
            <person name="Tetsu O."/>
        </authorList>
    </citation>
    <scope>UBIQUITINATION</scope>
    <scope>PHOSPHORYLATION AT THR-286</scope>
</reference>
<reference key="24">
    <citation type="journal article" date="2014" name="J. Proteomics">
        <title>An enzyme assisted RP-RPLC approach for in-depth analysis of human liver phosphoproteome.</title>
        <authorList>
            <person name="Bian Y."/>
            <person name="Song C."/>
            <person name="Cheng K."/>
            <person name="Dong M."/>
            <person name="Wang F."/>
            <person name="Huang J."/>
            <person name="Sun D."/>
            <person name="Wang L."/>
            <person name="Ye M."/>
            <person name="Zou H."/>
        </authorList>
    </citation>
    <scope>PHOSPHORYLATION [LARGE SCALE ANALYSIS] AT THR-286</scope>
    <scope>IDENTIFICATION BY MASS SPECTROMETRY [LARGE SCALE ANALYSIS]</scope>
    <source>
        <tissue>Liver</tissue>
    </source>
</reference>
<reference key="25">
    <citation type="journal article" date="2021" name="Nature">
        <title>AMBRA1 regulates cyclin D to guard S-phase entry and genomic integrity.</title>
        <authorList>
            <person name="Maiani E."/>
            <person name="Milletti G."/>
            <person name="Nazio F."/>
            <person name="Holdgaard S.G."/>
            <person name="Bartkova J."/>
            <person name="Rizza S."/>
            <person name="Cianfanelli V."/>
            <person name="Lorente M."/>
            <person name="Simoneschi D."/>
            <person name="Di Marco M."/>
            <person name="D'Acunzo P."/>
            <person name="Di Leo L."/>
            <person name="Rasmussen R."/>
            <person name="Montagna C."/>
            <person name="Raciti M."/>
            <person name="De Stefanis C."/>
            <person name="Gabicagogeascoa E."/>
            <person name="Rona G."/>
            <person name="Salvador N."/>
            <person name="Pupo E."/>
            <person name="Merchut-Maya J.M."/>
            <person name="Daniel C.J."/>
            <person name="Carinci M."/>
            <person name="Cesarini V."/>
            <person name="O'sullivan A."/>
            <person name="Jeong Y.T."/>
            <person name="Bordi M."/>
            <person name="Russo F."/>
            <person name="Campello S."/>
            <person name="Gallo A."/>
            <person name="Filomeni G."/>
            <person name="Lanzetti L."/>
            <person name="Sears R.C."/>
            <person name="Hamerlik P."/>
            <person name="Bartolazzi A."/>
            <person name="Hynds R.E."/>
            <person name="Pearce D.R."/>
            <person name="Swanton C."/>
            <person name="Pagano M."/>
            <person name="Velasco G."/>
            <person name="Papaleo E."/>
            <person name="De Zio D."/>
            <person name="Maya-Mendoza A."/>
            <person name="Locatelli F."/>
            <person name="Bartek J."/>
            <person name="Cecconi F."/>
        </authorList>
    </citation>
    <scope>UBIQUITINATION</scope>
    <scope>PHOSPHORYLATION AT THR-286</scope>
    <scope>MUTAGENESIS OF THR-286</scope>
</reference>
<reference key="26">
    <citation type="journal article" date="2021" name="Nature">
        <title>CRL4AMBRA1 is a master regulator of D-type cyclins.</title>
        <authorList>
            <person name="Simoneschi D."/>
            <person name="Rona G."/>
            <person name="Zhou N."/>
            <person name="Jeong Y.T."/>
            <person name="Jiang S."/>
            <person name="Milletti G."/>
            <person name="Arbini A.A."/>
            <person name="O'Sullivan A."/>
            <person name="Wang A.A."/>
            <person name="Nithikasem S."/>
            <person name="Keegan S."/>
            <person name="Siu Y."/>
            <person name="Cianfanelli V."/>
            <person name="Maiani E."/>
            <person name="Nazio F."/>
            <person name="Cecconi F."/>
            <person name="Boccalatte F."/>
            <person name="Fenyoe D."/>
            <person name="Jones D.R."/>
            <person name="Busino L."/>
            <person name="Pagano M."/>
        </authorList>
    </citation>
    <scope>FUNCTION</scope>
    <scope>UBIQUITINATION AT LYS-269</scope>
    <scope>PHOSPHORYLATION AT THR-286</scope>
    <scope>MUTAGENESIS OF THR-286 AND PRO-287</scope>
</reference>
<reference key="27">
    <citation type="journal article" date="2021" name="Nature">
        <title>The AMBRA1 E3 ligase adaptor regulates the stability of cyclin D.</title>
        <authorList>
            <person name="Chaikovsky A.C."/>
            <person name="Li C."/>
            <person name="Jeng E.E."/>
            <person name="Loebell S."/>
            <person name="Lee M.C."/>
            <person name="Murray C.W."/>
            <person name="Cheng R."/>
            <person name="Demeter J."/>
            <person name="Swaney D.L."/>
            <person name="Chen S.H."/>
            <person name="Newton B.W."/>
            <person name="Johnson J.R."/>
            <person name="Drainas A.P."/>
            <person name="Shue Y.T."/>
            <person name="Seoane J.A."/>
            <person name="Srinivasan P."/>
            <person name="He A."/>
            <person name="Yoshida A."/>
            <person name="Hipkins S.Q."/>
            <person name="McCrea E."/>
            <person name="Poltorack C.D."/>
            <person name="Krogan N.J."/>
            <person name="Diehl J.A."/>
            <person name="Kong C."/>
            <person name="Jackson P.K."/>
            <person name="Curtis C."/>
            <person name="Petrov D.A."/>
            <person name="Bassik M.C."/>
            <person name="Winslow M.M."/>
            <person name="Sage J."/>
        </authorList>
    </citation>
    <scope>UBIQUITINATION</scope>
    <scope>PHOSPHORYLATION AT THR-286</scope>
    <scope>MUTAGENESIS OF THR-286</scope>
</reference>
<reference key="28">
    <citation type="journal article" date="2009" name="Proc. Natl. Acad. Sci. U.S.A.">
        <title>Crystal structure of human CDK4 in complex with a D-type cyclin.</title>
        <authorList>
            <person name="Day P.J."/>
            <person name="Cleasby A."/>
            <person name="Tickle I.J."/>
            <person name="O'Reilly M."/>
            <person name="Coyle J.E."/>
            <person name="Holding F.P."/>
            <person name="McMenamin R.L."/>
            <person name="Yon J."/>
            <person name="Chopra R."/>
            <person name="Lengauer C."/>
            <person name="Jhoti H."/>
        </authorList>
    </citation>
    <scope>X-RAY CRYSTALLOGRAPHY (2.3 ANGSTROMS) OF 1-271 IN COMPLEX WITH WILD TYPE AND MUTANTS ALA-172; PHE-172 AND ASP-172 CDK4</scope>
</reference>
<reference evidence="31" key="29">
    <citation type="journal article" date="2018" name="Proc. Natl. Acad. Sci. U.S.A.">
        <title>Structural basis of the phosphorylation-independent recognition of cyclin D1 by the SCFFBXO31 ubiquitin ligase.</title>
        <authorList>
            <person name="Li Y."/>
            <person name="Jin K."/>
            <person name="Bunker E."/>
            <person name="Zhang X."/>
            <person name="Luo X."/>
            <person name="Liu X."/>
            <person name="Hao B."/>
        </authorList>
    </citation>
    <scope>X-RAY CRYSTALLOGRAPHY (2.70 ANGSTROMS) OF 279-295 IN COMPLEX WITH FBXO31</scope>
    <scope>SUBCELLULAR LOCATION</scope>
    <scope>UBIQUITINATION</scope>
    <scope>PHOSPHORYLATION AT THR-286</scope>
</reference>
<gene>
    <name evidence="28 30" type="primary">CCND1</name>
    <name evidence="26" type="synonym">BCL1</name>
    <name evidence="26" type="synonym">PRAD1</name>
</gene>
<feature type="chain" id="PRO_0000080430" description="G1/S-specific cyclin-D1">
    <location>
        <begin position="1"/>
        <end position="295"/>
    </location>
</feature>
<feature type="domain" description="Cyclin N-terminal">
    <location>
        <begin position="28"/>
        <end position="152"/>
    </location>
</feature>
<feature type="region of interest" description="Disordered" evidence="2">
    <location>
        <begin position="262"/>
        <end position="295"/>
    </location>
</feature>
<feature type="compositionally biased region" description="Acidic residues" evidence="2">
    <location>
        <begin position="272"/>
        <end position="282"/>
    </location>
</feature>
<feature type="modified residue" description="Phosphothreonine" evidence="13 17 18 19 20 32">
    <location>
        <position position="286"/>
    </location>
</feature>
<feature type="cross-link" description="Glycyl lysine isopeptide (Lys-Gly) (interchain with G-Cter in ubiquitin)" evidence="19">
    <location>
        <position position="269"/>
    </location>
</feature>
<feature type="mutagenesis site" description="Reduced ubiquitination and subsequent degradation by the proteasome." evidence="3">
    <original>TPT</original>
    <variation>ATA</variation>
    <location>
        <begin position="286"/>
        <end position="288"/>
    </location>
</feature>
<feature type="mutagenesis site" description="Reduced interaction with the DCX(AMBRA1) complex, and subsequent ubiquitination and degradation by the proteasome. Abolished ubiquitination and subsequent degradation following DNA damage." evidence="13 18 19 20">
    <original>T</original>
    <variation>A</variation>
    <location>
        <position position="286"/>
    </location>
</feature>
<feature type="mutagenesis site" description="Reduced interaction with the DCX(AMBRA1) complex, and subsequent ubiquitination and degradation by the proteasome." evidence="19">
    <original>P</original>
    <variation>A</variation>
    <variation>L</variation>
    <variation>S</variation>
    <location>
        <position position="287"/>
    </location>
</feature>
<feature type="sequence conflict" description="In Ref. 3; AAA52136." evidence="29" ref="3">
    <original>N</original>
    <variation>G</variation>
    <location>
        <position position="130"/>
    </location>
</feature>
<feature type="sequence conflict" description="In Ref. 2; M74092." evidence="29" ref="2">
    <original>MP</original>
    <variation>IA</variation>
    <location>
        <begin position="168"/>
        <end position="169"/>
    </location>
</feature>
<feature type="sequence conflict" description="In Ref. 3; AAA52136." evidence="29" ref="3">
    <original>L</original>
    <variation>S</variation>
    <location>
        <position position="188"/>
    </location>
</feature>
<feature type="strand" evidence="33">
    <location>
        <begin position="9"/>
        <end position="11"/>
    </location>
</feature>
<feature type="helix" evidence="36">
    <location>
        <begin position="21"/>
        <end position="24"/>
    </location>
</feature>
<feature type="helix" evidence="33">
    <location>
        <begin position="26"/>
        <end position="37"/>
    </location>
</feature>
<feature type="helix" evidence="33">
    <location>
        <begin position="44"/>
        <end position="47"/>
    </location>
</feature>
<feature type="helix" evidence="33">
    <location>
        <begin position="54"/>
        <end position="70"/>
    </location>
</feature>
<feature type="helix" evidence="33">
    <location>
        <begin position="77"/>
        <end position="89"/>
    </location>
</feature>
<feature type="turn" evidence="33">
    <location>
        <begin position="96"/>
        <end position="98"/>
    </location>
</feature>
<feature type="helix" evidence="33">
    <location>
        <begin position="99"/>
        <end position="114"/>
    </location>
</feature>
<feature type="helix" evidence="33">
    <location>
        <begin position="121"/>
        <end position="127"/>
    </location>
</feature>
<feature type="turn" evidence="33">
    <location>
        <begin position="128"/>
        <end position="130"/>
    </location>
</feature>
<feature type="helix" evidence="33">
    <location>
        <begin position="134"/>
        <end position="147"/>
    </location>
</feature>
<feature type="turn" evidence="33">
    <location>
        <begin position="148"/>
        <end position="150"/>
    </location>
</feature>
<feature type="helix" evidence="33">
    <location>
        <begin position="157"/>
        <end position="166"/>
    </location>
</feature>
<feature type="helix" evidence="33">
    <location>
        <begin position="172"/>
        <end position="190"/>
    </location>
</feature>
<feature type="helix" evidence="33">
    <location>
        <begin position="194"/>
        <end position="197"/>
    </location>
</feature>
<feature type="helix" evidence="33">
    <location>
        <begin position="200"/>
        <end position="218"/>
    </location>
</feature>
<feature type="turn" evidence="34">
    <location>
        <begin position="220"/>
        <end position="222"/>
    </location>
</feature>
<feature type="helix" evidence="33">
    <location>
        <begin position="224"/>
        <end position="226"/>
    </location>
</feature>
<feature type="helix" evidence="33">
    <location>
        <begin position="229"/>
        <end position="237"/>
    </location>
</feature>
<feature type="helix" evidence="33">
    <location>
        <begin position="241"/>
        <end position="255"/>
    </location>
</feature>
<feature type="turn" evidence="33">
    <location>
        <begin position="256"/>
        <end position="260"/>
    </location>
</feature>
<feature type="strand" evidence="33">
    <location>
        <begin position="261"/>
        <end position="263"/>
    </location>
</feature>
<feature type="helix" evidence="35">
    <location>
        <begin position="288"/>
        <end position="290"/>
    </location>
</feature>
<feature type="helix" evidence="35">
    <location>
        <begin position="292"/>
        <end position="294"/>
    </location>
</feature>
<evidence type="ECO:0000250" key="1">
    <source>
        <dbReference type="UniProtKB" id="P25322"/>
    </source>
</evidence>
<evidence type="ECO:0000256" key="2">
    <source>
        <dbReference type="SAM" id="MobiDB-lite"/>
    </source>
</evidence>
<evidence type="ECO:0000269" key="3">
    <source>
    </source>
</evidence>
<evidence type="ECO:0000269" key="4">
    <source>
    </source>
</evidence>
<evidence type="ECO:0000269" key="5">
    <source>
    </source>
</evidence>
<evidence type="ECO:0000269" key="6">
    <source>
    </source>
</evidence>
<evidence type="ECO:0000269" key="7">
    <source>
    </source>
</evidence>
<evidence type="ECO:0000269" key="8">
    <source>
    </source>
</evidence>
<evidence type="ECO:0000269" key="9">
    <source>
    </source>
</evidence>
<evidence type="ECO:0000269" key="10">
    <source>
    </source>
</evidence>
<evidence type="ECO:0000269" key="11">
    <source>
    </source>
</evidence>
<evidence type="ECO:0000269" key="12">
    <source>
    </source>
</evidence>
<evidence type="ECO:0000269" key="13">
    <source>
    </source>
</evidence>
<evidence type="ECO:0000269" key="14">
    <source>
    </source>
</evidence>
<evidence type="ECO:0000269" key="15">
    <source>
    </source>
</evidence>
<evidence type="ECO:0000269" key="16">
    <source>
    </source>
</evidence>
<evidence type="ECO:0000269" key="17">
    <source>
    </source>
</evidence>
<evidence type="ECO:0000269" key="18">
    <source>
    </source>
</evidence>
<evidence type="ECO:0000269" key="19">
    <source>
    </source>
</evidence>
<evidence type="ECO:0000269" key="20">
    <source>
    </source>
</evidence>
<evidence type="ECO:0000269" key="21">
    <source>
    </source>
</evidence>
<evidence type="ECO:0000269" key="22">
    <source>
    </source>
</evidence>
<evidence type="ECO:0000269" key="23">
    <source>
    </source>
</evidence>
<evidence type="ECO:0000269" key="24">
    <source>
    </source>
</evidence>
<evidence type="ECO:0000269" key="25">
    <source>
    </source>
</evidence>
<evidence type="ECO:0000303" key="26">
    <source>
    </source>
</evidence>
<evidence type="ECO:0000303" key="27">
    <source>
    </source>
</evidence>
<evidence type="ECO:0000303" key="28">
    <source>
    </source>
</evidence>
<evidence type="ECO:0000305" key="29"/>
<evidence type="ECO:0000312" key="30">
    <source>
        <dbReference type="HGNC" id="HGNC:1582"/>
    </source>
</evidence>
<evidence type="ECO:0007744" key="31">
    <source>
        <dbReference type="PDB" id="5VZU"/>
    </source>
</evidence>
<evidence type="ECO:0007744" key="32">
    <source>
    </source>
</evidence>
<evidence type="ECO:0007829" key="33">
    <source>
        <dbReference type="PDB" id="2W96"/>
    </source>
</evidence>
<evidence type="ECO:0007829" key="34">
    <source>
        <dbReference type="PDB" id="2W9Z"/>
    </source>
</evidence>
<evidence type="ECO:0007829" key="35">
    <source>
        <dbReference type="PDB" id="5VZU"/>
    </source>
</evidence>
<evidence type="ECO:0007829" key="36">
    <source>
        <dbReference type="PDB" id="6P8G"/>
    </source>
</evidence>
<organism>
    <name type="scientific">Homo sapiens</name>
    <name type="common">Human</name>
    <dbReference type="NCBI Taxonomy" id="9606"/>
    <lineage>
        <taxon>Eukaryota</taxon>
        <taxon>Metazoa</taxon>
        <taxon>Chordata</taxon>
        <taxon>Craniata</taxon>
        <taxon>Vertebrata</taxon>
        <taxon>Euteleostomi</taxon>
        <taxon>Mammalia</taxon>
        <taxon>Eutheria</taxon>
        <taxon>Euarchontoglires</taxon>
        <taxon>Primates</taxon>
        <taxon>Haplorrhini</taxon>
        <taxon>Catarrhini</taxon>
        <taxon>Hominidae</taxon>
        <taxon>Homo</taxon>
    </lineage>
</organism>
<dbReference type="EMBL" id="X59798">
    <property type="protein sequence ID" value="CAA42470.1"/>
    <property type="molecule type" value="mRNA"/>
</dbReference>
<dbReference type="EMBL" id="M74092">
    <property type="status" value="NOT_ANNOTATED_CDS"/>
    <property type="molecule type" value="mRNA"/>
</dbReference>
<dbReference type="EMBL" id="M64349">
    <property type="protein sequence ID" value="AAA52136.1"/>
    <property type="molecule type" value="mRNA"/>
</dbReference>
<dbReference type="EMBL" id="M73554">
    <property type="protein sequence ID" value="AAA58392.1"/>
    <property type="molecule type" value="mRNA"/>
</dbReference>
<dbReference type="EMBL" id="Z23022">
    <property type="protein sequence ID" value="CAA80558.1"/>
    <property type="molecule type" value="mRNA"/>
</dbReference>
<dbReference type="EMBL" id="BT019845">
    <property type="protein sequence ID" value="AAV38648.1"/>
    <property type="molecule type" value="mRNA"/>
</dbReference>
<dbReference type="EMBL" id="AF511593">
    <property type="protein sequence ID" value="AAM34300.2"/>
    <property type="molecule type" value="Genomic_DNA"/>
</dbReference>
<dbReference type="EMBL" id="BC000076">
    <property type="protein sequence ID" value="AAH00076.1"/>
    <property type="molecule type" value="mRNA"/>
</dbReference>
<dbReference type="EMBL" id="BC001501">
    <property type="protein sequence ID" value="AAH01501.1"/>
    <property type="molecule type" value="mRNA"/>
</dbReference>
<dbReference type="EMBL" id="BC014078">
    <property type="protein sequence ID" value="AAH14078.1"/>
    <property type="molecule type" value="mRNA"/>
</dbReference>
<dbReference type="EMBL" id="BC023620">
    <property type="protein sequence ID" value="AAH23620.1"/>
    <property type="molecule type" value="mRNA"/>
</dbReference>
<dbReference type="EMBL" id="BC025302">
    <property type="protein sequence ID" value="AAH25302.1"/>
    <property type="molecule type" value="mRNA"/>
</dbReference>
<dbReference type="EMBL" id="L09054">
    <property type="protein sequence ID" value="AAA36481.1"/>
    <property type="molecule type" value="Genomic_DNA"/>
</dbReference>
<dbReference type="CCDS" id="CCDS8191.1"/>
<dbReference type="PIR" id="A38977">
    <property type="entry name" value="A38977"/>
</dbReference>
<dbReference type="RefSeq" id="NP_444284.1">
    <property type="nucleotide sequence ID" value="NM_053056.3"/>
</dbReference>
<dbReference type="PDB" id="2W96">
    <property type="method" value="X-ray"/>
    <property type="resolution" value="2.30 A"/>
    <property type="chains" value="A=1-271"/>
</dbReference>
<dbReference type="PDB" id="2W99">
    <property type="method" value="X-ray"/>
    <property type="resolution" value="2.80 A"/>
    <property type="chains" value="A=1-271"/>
</dbReference>
<dbReference type="PDB" id="2W9F">
    <property type="method" value="X-ray"/>
    <property type="resolution" value="2.85 A"/>
    <property type="chains" value="A=1-271"/>
</dbReference>
<dbReference type="PDB" id="2W9Z">
    <property type="method" value="X-ray"/>
    <property type="resolution" value="2.45 A"/>
    <property type="chains" value="A=16-271"/>
</dbReference>
<dbReference type="PDB" id="5VZU">
    <property type="method" value="X-ray"/>
    <property type="resolution" value="2.70 A"/>
    <property type="chains" value="E/F=279-295"/>
</dbReference>
<dbReference type="PDB" id="6P8E">
    <property type="method" value="X-ray"/>
    <property type="resolution" value="2.30 A"/>
    <property type="chains" value="A=19-267"/>
</dbReference>
<dbReference type="PDB" id="6P8F">
    <property type="method" value="X-ray"/>
    <property type="resolution" value="2.89 A"/>
    <property type="chains" value="A=19-267"/>
</dbReference>
<dbReference type="PDB" id="6P8G">
    <property type="method" value="X-ray"/>
    <property type="resolution" value="2.80 A"/>
    <property type="chains" value="A=19-267"/>
</dbReference>
<dbReference type="PDB" id="6P8H">
    <property type="method" value="X-ray"/>
    <property type="resolution" value="3.19 A"/>
    <property type="chains" value="A=19-267"/>
</dbReference>
<dbReference type="PDBsum" id="2W96"/>
<dbReference type="PDBsum" id="2W99"/>
<dbReference type="PDBsum" id="2W9F"/>
<dbReference type="PDBsum" id="2W9Z"/>
<dbReference type="PDBsum" id="5VZU"/>
<dbReference type="PDBsum" id="6P8E"/>
<dbReference type="PDBsum" id="6P8F"/>
<dbReference type="PDBsum" id="6P8G"/>
<dbReference type="PDBsum" id="6P8H"/>
<dbReference type="SMR" id="P24385"/>
<dbReference type="BioGRID" id="107067">
    <property type="interactions" value="280"/>
</dbReference>
<dbReference type="ComplexPortal" id="CPX-2010">
    <property type="entry name" value="Cyclin D1-CDK4 complex"/>
</dbReference>
<dbReference type="ComplexPortal" id="CPX-2014">
    <property type="entry name" value="Cyclin D1-CDK6 complex"/>
</dbReference>
<dbReference type="CORUM" id="P24385"/>
<dbReference type="DIP" id="DIP-123N"/>
<dbReference type="FunCoup" id="P24385">
    <property type="interactions" value="2102"/>
</dbReference>
<dbReference type="IntAct" id="P24385">
    <property type="interactions" value="80"/>
</dbReference>
<dbReference type="MINT" id="P24385"/>
<dbReference type="STRING" id="9606.ENSP00000227507"/>
<dbReference type="BindingDB" id="P24385"/>
<dbReference type="ChEMBL" id="CHEMBL3610"/>
<dbReference type="DrugBank" id="DB00945">
    <property type="generic name" value="Acetylsalicylic acid"/>
</dbReference>
<dbReference type="DrugBank" id="DB01169">
    <property type="generic name" value="Arsenic trioxide"/>
</dbReference>
<dbReference type="DrugBank" id="DB12004">
    <property type="generic name" value="Briciclib"/>
</dbReference>
<dbReference type="DrugBank" id="DB11752">
    <property type="generic name" value="Bryostatin 1"/>
</dbReference>
<dbReference type="DrugBank" id="DB11718">
    <property type="generic name" value="Encorafenib"/>
</dbReference>
<dbReference type="DrugBank" id="DB12340">
    <property type="generic name" value="Navitoclax"/>
</dbReference>
<dbReference type="DrugCentral" id="P24385"/>
<dbReference type="TCDB" id="1.I.1.1.3">
    <property type="family name" value="the nuclear pore complex (npc) family"/>
</dbReference>
<dbReference type="GlyGen" id="P24385">
    <property type="glycosylation" value="1 site, 1 O-linked glycan (1 site)"/>
</dbReference>
<dbReference type="iPTMnet" id="P24385"/>
<dbReference type="PhosphoSitePlus" id="P24385"/>
<dbReference type="BioMuta" id="CCND1"/>
<dbReference type="DMDM" id="116152"/>
<dbReference type="CPTAC" id="CPTAC-2804"/>
<dbReference type="CPTAC" id="CPTAC-2805"/>
<dbReference type="CPTAC" id="CPTAC-5761"/>
<dbReference type="CPTAC" id="CPTAC-5762"/>
<dbReference type="CPTAC" id="CPTAC-5763"/>
<dbReference type="CPTAC" id="CPTAC-5764"/>
<dbReference type="CPTAC" id="CPTAC-5765"/>
<dbReference type="CPTAC" id="non-CPTAC-5363"/>
<dbReference type="CPTAC" id="non-CPTAC-5536"/>
<dbReference type="CPTAC" id="non-CPTAC-5538"/>
<dbReference type="jPOST" id="P24385"/>
<dbReference type="MassIVE" id="P24385"/>
<dbReference type="PaxDb" id="9606-ENSP00000227507"/>
<dbReference type="PeptideAtlas" id="P24385"/>
<dbReference type="ProteomicsDB" id="54198"/>
<dbReference type="Pumba" id="P24385"/>
<dbReference type="Antibodypedia" id="3660">
    <property type="antibodies" value="2173 antibodies from 53 providers"/>
</dbReference>
<dbReference type="CPTC" id="P24385">
    <property type="antibodies" value="7 antibodies"/>
</dbReference>
<dbReference type="DNASU" id="595"/>
<dbReference type="Ensembl" id="ENST00000227507.3">
    <property type="protein sequence ID" value="ENSP00000227507.2"/>
    <property type="gene ID" value="ENSG00000110092.4"/>
</dbReference>
<dbReference type="GeneID" id="595"/>
<dbReference type="KEGG" id="hsa:595"/>
<dbReference type="MANE-Select" id="ENST00000227507.3">
    <property type="protein sequence ID" value="ENSP00000227507.2"/>
    <property type="RefSeq nucleotide sequence ID" value="NM_053056.3"/>
    <property type="RefSeq protein sequence ID" value="NP_444284.1"/>
</dbReference>
<dbReference type="AGR" id="HGNC:1582"/>
<dbReference type="CTD" id="595"/>
<dbReference type="DisGeNET" id="595"/>
<dbReference type="GeneCards" id="CCND1"/>
<dbReference type="HGNC" id="HGNC:1582">
    <property type="gene designation" value="CCND1"/>
</dbReference>
<dbReference type="HPA" id="ENSG00000110092">
    <property type="expression patterns" value="Low tissue specificity"/>
</dbReference>
<dbReference type="MalaCards" id="CCND1"/>
<dbReference type="MIM" id="168461">
    <property type="type" value="gene"/>
</dbReference>
<dbReference type="MIM" id="254500">
    <property type="type" value="phenotype"/>
</dbReference>
<dbReference type="neXtProt" id="NX_P24385"/>
<dbReference type="OpenTargets" id="ENSG00000110092"/>
<dbReference type="Orphanet" id="67038">
    <property type="disease" value="B-cell chronic lymphocytic leukemia"/>
</dbReference>
<dbReference type="Orphanet" id="52416">
    <property type="disease" value="Mantle cell lymphoma"/>
</dbReference>
<dbReference type="Orphanet" id="29073">
    <property type="disease" value="Multiple myeloma"/>
</dbReference>
<dbReference type="Orphanet" id="892">
    <property type="disease" value="Von Hippel-Lindau disease"/>
</dbReference>
<dbReference type="PharmGKB" id="PA75"/>
<dbReference type="VEuPathDB" id="HostDB:ENSG00000110092"/>
<dbReference type="eggNOG" id="KOG0656">
    <property type="taxonomic scope" value="Eukaryota"/>
</dbReference>
<dbReference type="GeneTree" id="ENSGT00940000157816"/>
<dbReference type="HOGENOM" id="CLU_052190_0_0_1"/>
<dbReference type="InParanoid" id="P24385"/>
<dbReference type="OMA" id="PCELLQM"/>
<dbReference type="OrthoDB" id="306099at2759"/>
<dbReference type="PAN-GO" id="P24385">
    <property type="GO annotations" value="7 GO annotations based on evolutionary models"/>
</dbReference>
<dbReference type="PhylomeDB" id="P24385"/>
<dbReference type="TreeFam" id="TF101004"/>
<dbReference type="PathwayCommons" id="P24385"/>
<dbReference type="Reactome" id="R-HSA-187577">
    <property type="pathway name" value="SCF(Skp2)-mediated degradation of p27/p21"/>
</dbReference>
<dbReference type="Reactome" id="R-HSA-1912408">
    <property type="pathway name" value="Pre-NOTCH Transcription and Translation"/>
</dbReference>
<dbReference type="Reactome" id="R-HSA-3214858">
    <property type="pathway name" value="RMTs methylate histone arginines"/>
</dbReference>
<dbReference type="Reactome" id="R-HSA-6785807">
    <property type="pathway name" value="Interleukin-4 and Interleukin-13 signaling"/>
</dbReference>
<dbReference type="Reactome" id="R-HSA-69231">
    <property type="pathway name" value="Cyclin D associated events in G1"/>
</dbReference>
<dbReference type="Reactome" id="R-HSA-75815">
    <property type="pathway name" value="Ubiquitin-dependent degradation of Cyclin D"/>
</dbReference>
<dbReference type="Reactome" id="R-HSA-8849470">
    <property type="pathway name" value="PTK6 Regulates Cell Cycle"/>
</dbReference>
<dbReference type="Reactome" id="R-HSA-8853884">
    <property type="pathway name" value="Transcriptional Regulation by VENTX"/>
</dbReference>
<dbReference type="Reactome" id="R-HSA-8878166">
    <property type="pathway name" value="Transcriptional regulation by RUNX2"/>
</dbReference>
<dbReference type="Reactome" id="R-HSA-8934593">
    <property type="pathway name" value="Regulation of RUNX1 Expression and Activity"/>
</dbReference>
<dbReference type="Reactome" id="R-HSA-8951430">
    <property type="pathway name" value="RUNX3 regulates WNT signaling"/>
</dbReference>
<dbReference type="Reactome" id="R-HSA-8951936">
    <property type="pathway name" value="RUNX3 regulates p14-ARF"/>
</dbReference>
<dbReference type="Reactome" id="R-HSA-9018519">
    <property type="pathway name" value="Estrogen-dependent gene expression"/>
</dbReference>
<dbReference type="Reactome" id="R-HSA-9634638">
    <property type="pathway name" value="Estrogen-dependent nuclear events downstream of ESR-membrane signaling"/>
</dbReference>
<dbReference type="Reactome" id="R-HSA-9661069">
    <property type="pathway name" value="Defective binding of RB1 mutants to E2F1,(E2F2, E2F3)"/>
</dbReference>
<dbReference type="Reactome" id="R-HSA-9754119">
    <property type="pathway name" value="Drug-mediated inhibition of CDK4/CDK6 activity"/>
</dbReference>
<dbReference type="Reactome" id="R-HSA-9825892">
    <property type="pathway name" value="Regulation of MITF-M-dependent genes involved in cell cycle and proliferation"/>
</dbReference>
<dbReference type="SignaLink" id="P24385"/>
<dbReference type="SIGNOR" id="P24385"/>
<dbReference type="BioGRID-ORCS" id="595">
    <property type="hits" value="538 hits in 1169 CRISPR screens"/>
</dbReference>
<dbReference type="ChiTaRS" id="CCND1">
    <property type="organism name" value="human"/>
</dbReference>
<dbReference type="EvolutionaryTrace" id="P24385"/>
<dbReference type="GeneWiki" id="Cyclin_D1"/>
<dbReference type="GenomeRNAi" id="595"/>
<dbReference type="Pharos" id="P24385">
    <property type="development level" value="Tchem"/>
</dbReference>
<dbReference type="PRO" id="PR:P24385"/>
<dbReference type="Proteomes" id="UP000005640">
    <property type="component" value="Chromosome 11"/>
</dbReference>
<dbReference type="RNAct" id="P24385">
    <property type="molecule type" value="protein"/>
</dbReference>
<dbReference type="Bgee" id="ENSG00000110092">
    <property type="expression patterns" value="Expressed in endometrium epithelium and 192 other cell types or tissues"/>
</dbReference>
<dbReference type="ExpressionAtlas" id="P24385">
    <property type="expression patterns" value="baseline and differential"/>
</dbReference>
<dbReference type="GO" id="GO:0005923">
    <property type="term" value="C:bicellular tight junction"/>
    <property type="evidence" value="ECO:0007669"/>
    <property type="project" value="Ensembl"/>
</dbReference>
<dbReference type="GO" id="GO:0097128">
    <property type="term" value="C:cyclin D1-CDK4 complex"/>
    <property type="evidence" value="ECO:0000353"/>
    <property type="project" value="ComplexPortal"/>
</dbReference>
<dbReference type="GO" id="GO:0097131">
    <property type="term" value="C:cyclin D1-CDK6 complex"/>
    <property type="evidence" value="ECO:0000353"/>
    <property type="project" value="ComplexPortal"/>
</dbReference>
<dbReference type="GO" id="GO:0000307">
    <property type="term" value="C:cyclin-dependent protein kinase holoenzyme complex"/>
    <property type="evidence" value="ECO:0000314"/>
    <property type="project" value="BHF-UCL"/>
</dbReference>
<dbReference type="GO" id="GO:0005737">
    <property type="term" value="C:cytoplasm"/>
    <property type="evidence" value="ECO:0000314"/>
    <property type="project" value="UniProtKB"/>
</dbReference>
<dbReference type="GO" id="GO:0005829">
    <property type="term" value="C:cytosol"/>
    <property type="evidence" value="ECO:0000304"/>
    <property type="project" value="Reactome"/>
</dbReference>
<dbReference type="GO" id="GO:0005815">
    <property type="term" value="C:microtubule organizing center"/>
    <property type="evidence" value="ECO:0000318"/>
    <property type="project" value="GO_Central"/>
</dbReference>
<dbReference type="GO" id="GO:0031965">
    <property type="term" value="C:nuclear membrane"/>
    <property type="evidence" value="ECO:0007669"/>
    <property type="project" value="UniProtKB-SubCell"/>
</dbReference>
<dbReference type="GO" id="GO:0005654">
    <property type="term" value="C:nucleoplasm"/>
    <property type="evidence" value="ECO:0000314"/>
    <property type="project" value="HPA"/>
</dbReference>
<dbReference type="GO" id="GO:0005634">
    <property type="term" value="C:nucleus"/>
    <property type="evidence" value="ECO:0000314"/>
    <property type="project" value="UniProtKB"/>
</dbReference>
<dbReference type="GO" id="GO:0017053">
    <property type="term" value="C:transcription repressor complex"/>
    <property type="evidence" value="ECO:0000314"/>
    <property type="project" value="UniProtKB"/>
</dbReference>
<dbReference type="GO" id="GO:0061575">
    <property type="term" value="F:cyclin-dependent protein serine/threonine kinase activator activity"/>
    <property type="evidence" value="ECO:0000314"/>
    <property type="project" value="UniProt"/>
</dbReference>
<dbReference type="GO" id="GO:0016538">
    <property type="term" value="F:cyclin-dependent protein serine/threonine kinase regulator activity"/>
    <property type="evidence" value="ECO:0000318"/>
    <property type="project" value="GO_Central"/>
</dbReference>
<dbReference type="GO" id="GO:0019899">
    <property type="term" value="F:enzyme binding"/>
    <property type="evidence" value="ECO:0000353"/>
    <property type="project" value="UniProtKB"/>
</dbReference>
<dbReference type="GO" id="GO:0042826">
    <property type="term" value="F:histone deacetylase binding"/>
    <property type="evidence" value="ECO:0000353"/>
    <property type="project" value="UniProtKB"/>
</dbReference>
<dbReference type="GO" id="GO:0070064">
    <property type="term" value="F:proline-rich region binding"/>
    <property type="evidence" value="ECO:0000314"/>
    <property type="project" value="UniProtKB"/>
</dbReference>
<dbReference type="GO" id="GO:0004672">
    <property type="term" value="F:protein kinase activity"/>
    <property type="evidence" value="ECO:0007669"/>
    <property type="project" value="Ensembl"/>
</dbReference>
<dbReference type="GO" id="GO:0019901">
    <property type="term" value="F:protein kinase binding"/>
    <property type="evidence" value="ECO:0000353"/>
    <property type="project" value="UniProtKB"/>
</dbReference>
<dbReference type="GO" id="GO:0043539">
    <property type="term" value="F:protein serine/threonine kinase activator activity"/>
    <property type="evidence" value="ECO:0000314"/>
    <property type="project" value="BHF-UCL"/>
</dbReference>
<dbReference type="GO" id="GO:0044877">
    <property type="term" value="F:protein-containing complex binding"/>
    <property type="evidence" value="ECO:0007669"/>
    <property type="project" value="Ensembl"/>
</dbReference>
<dbReference type="GO" id="GO:0003714">
    <property type="term" value="F:transcription corepressor activity"/>
    <property type="evidence" value="ECO:0000314"/>
    <property type="project" value="UniProtKB"/>
</dbReference>
<dbReference type="GO" id="GO:0051301">
    <property type="term" value="P:cell division"/>
    <property type="evidence" value="ECO:0007669"/>
    <property type="project" value="UniProtKB-KW"/>
</dbReference>
<dbReference type="GO" id="GO:0006974">
    <property type="term" value="P:DNA damage response"/>
    <property type="evidence" value="ECO:0000314"/>
    <property type="project" value="UniProtKB"/>
</dbReference>
<dbReference type="GO" id="GO:0030968">
    <property type="term" value="P:endoplasmic reticulum unfolded protein response"/>
    <property type="evidence" value="ECO:0007669"/>
    <property type="project" value="Ensembl"/>
</dbReference>
<dbReference type="GO" id="GO:0045444">
    <property type="term" value="P:fat cell differentiation"/>
    <property type="evidence" value="ECO:0007669"/>
    <property type="project" value="Ensembl"/>
</dbReference>
<dbReference type="GO" id="GO:0000082">
    <property type="term" value="P:G1/S transition of mitotic cell cycle"/>
    <property type="evidence" value="ECO:0000314"/>
    <property type="project" value="UniProtKB"/>
</dbReference>
<dbReference type="GO" id="GO:0007595">
    <property type="term" value="P:lactation"/>
    <property type="evidence" value="ECO:0007669"/>
    <property type="project" value="Ensembl"/>
</dbReference>
<dbReference type="GO" id="GO:0033327">
    <property type="term" value="P:Leydig cell differentiation"/>
    <property type="evidence" value="ECO:0007669"/>
    <property type="project" value="Ensembl"/>
</dbReference>
<dbReference type="GO" id="GO:0097421">
    <property type="term" value="P:liver regeneration"/>
    <property type="evidence" value="ECO:0007669"/>
    <property type="project" value="Ensembl"/>
</dbReference>
<dbReference type="GO" id="GO:0060749">
    <property type="term" value="P:mammary gland alveolus development"/>
    <property type="evidence" value="ECO:0007669"/>
    <property type="project" value="Ensembl"/>
</dbReference>
<dbReference type="GO" id="GO:0033598">
    <property type="term" value="P:mammary gland epithelial cell proliferation"/>
    <property type="evidence" value="ECO:0007669"/>
    <property type="project" value="Ensembl"/>
</dbReference>
<dbReference type="GO" id="GO:0031571">
    <property type="term" value="P:mitotic G1 DNA damage checkpoint signaling"/>
    <property type="evidence" value="ECO:0000314"/>
    <property type="project" value="UniProtKB"/>
</dbReference>
<dbReference type="GO" id="GO:0030857">
    <property type="term" value="P:negative regulation of epithelial cell differentiation"/>
    <property type="evidence" value="ECO:0007669"/>
    <property type="project" value="Ensembl"/>
</dbReference>
<dbReference type="GO" id="GO:0043524">
    <property type="term" value="P:negative regulation of neuron apoptotic process"/>
    <property type="evidence" value="ECO:0007669"/>
    <property type="project" value="Ensembl"/>
</dbReference>
<dbReference type="GO" id="GO:0000122">
    <property type="term" value="P:negative regulation of transcription by RNA polymerase II"/>
    <property type="evidence" value="ECO:0000314"/>
    <property type="project" value="UniProtKB"/>
</dbReference>
<dbReference type="GO" id="GO:0030182">
    <property type="term" value="P:neuron differentiation"/>
    <property type="evidence" value="ECO:0007669"/>
    <property type="project" value="Ensembl"/>
</dbReference>
<dbReference type="GO" id="GO:1900087">
    <property type="term" value="P:positive regulation of G1/S transition of mitotic cell cycle"/>
    <property type="evidence" value="ECO:0000318"/>
    <property type="project" value="GO_Central"/>
</dbReference>
<dbReference type="GO" id="GO:0010971">
    <property type="term" value="P:positive regulation of G2/M transition of mitotic cell cycle"/>
    <property type="evidence" value="ECO:0000314"/>
    <property type="project" value="UniProtKB"/>
</dbReference>
<dbReference type="GO" id="GO:0033601">
    <property type="term" value="P:positive regulation of mammary gland epithelial cell proliferation"/>
    <property type="evidence" value="ECO:0007669"/>
    <property type="project" value="Ensembl"/>
</dbReference>
<dbReference type="GO" id="GO:0000320">
    <property type="term" value="P:re-entry into mitotic cell cycle"/>
    <property type="evidence" value="ECO:0007669"/>
    <property type="project" value="Ensembl"/>
</dbReference>
<dbReference type="GO" id="GO:0051592">
    <property type="term" value="P:response to calcium ion"/>
    <property type="evidence" value="ECO:0007669"/>
    <property type="project" value="Ensembl"/>
</dbReference>
<dbReference type="GO" id="GO:0051412">
    <property type="term" value="P:response to corticosterone"/>
    <property type="evidence" value="ECO:0007669"/>
    <property type="project" value="Ensembl"/>
</dbReference>
<dbReference type="GO" id="GO:0032355">
    <property type="term" value="P:response to estradiol"/>
    <property type="evidence" value="ECO:0007669"/>
    <property type="project" value="Ensembl"/>
</dbReference>
<dbReference type="GO" id="GO:0043627">
    <property type="term" value="P:response to estrogen"/>
    <property type="evidence" value="ECO:0007669"/>
    <property type="project" value="Ensembl"/>
</dbReference>
<dbReference type="GO" id="GO:0045471">
    <property type="term" value="P:response to ethanol"/>
    <property type="evidence" value="ECO:0007669"/>
    <property type="project" value="Ensembl"/>
</dbReference>
<dbReference type="GO" id="GO:0010039">
    <property type="term" value="P:response to iron ion"/>
    <property type="evidence" value="ECO:0007669"/>
    <property type="project" value="Ensembl"/>
</dbReference>
<dbReference type="GO" id="GO:0044321">
    <property type="term" value="P:response to leptin"/>
    <property type="evidence" value="ECO:0000314"/>
    <property type="project" value="UniProtKB"/>
</dbReference>
<dbReference type="GO" id="GO:0032026">
    <property type="term" value="P:response to magnesium ion"/>
    <property type="evidence" value="ECO:0007669"/>
    <property type="project" value="Ensembl"/>
</dbReference>
<dbReference type="GO" id="GO:0070141">
    <property type="term" value="P:response to UV-A"/>
    <property type="evidence" value="ECO:0000314"/>
    <property type="project" value="BHF-UCL"/>
</dbReference>
<dbReference type="GO" id="GO:0033197">
    <property type="term" value="P:response to vitamin E"/>
    <property type="evidence" value="ECO:0007669"/>
    <property type="project" value="Ensembl"/>
</dbReference>
<dbReference type="GO" id="GO:0010165">
    <property type="term" value="P:response to X-ray"/>
    <property type="evidence" value="ECO:0007669"/>
    <property type="project" value="Ensembl"/>
</dbReference>
<dbReference type="GO" id="GO:0009410">
    <property type="term" value="P:response to xenobiotic stimulus"/>
    <property type="evidence" value="ECO:0000270"/>
    <property type="project" value="UniProtKB"/>
</dbReference>
<dbReference type="GO" id="GO:0016055">
    <property type="term" value="P:Wnt signaling pathway"/>
    <property type="evidence" value="ECO:0007669"/>
    <property type="project" value="Ensembl"/>
</dbReference>
<dbReference type="CDD" id="cd20573">
    <property type="entry name" value="CYCLIN_CCND1_rpt1"/>
    <property type="match status" value="1"/>
</dbReference>
<dbReference type="CDD" id="cd20576">
    <property type="entry name" value="CYCLIN_CCND1_rpt2"/>
    <property type="match status" value="1"/>
</dbReference>
<dbReference type="DisProt" id="DP02226"/>
<dbReference type="FunFam" id="1.10.472.10:FF:000120">
    <property type="entry name" value="G1/S-specific cyclin-D1"/>
    <property type="match status" value="1"/>
</dbReference>
<dbReference type="Gene3D" id="1.10.472.10">
    <property type="entry name" value="Cyclin-like"/>
    <property type="match status" value="2"/>
</dbReference>
<dbReference type="InterPro" id="IPR039361">
    <property type="entry name" value="Cyclin"/>
</dbReference>
<dbReference type="InterPro" id="IPR013763">
    <property type="entry name" value="Cyclin-like_dom"/>
</dbReference>
<dbReference type="InterPro" id="IPR036915">
    <property type="entry name" value="Cyclin-like_sf"/>
</dbReference>
<dbReference type="InterPro" id="IPR004367">
    <property type="entry name" value="Cyclin_C-dom"/>
</dbReference>
<dbReference type="InterPro" id="IPR006671">
    <property type="entry name" value="Cyclin_N"/>
</dbReference>
<dbReference type="InterPro" id="IPR048258">
    <property type="entry name" value="Cyclins_cyclin-box"/>
</dbReference>
<dbReference type="PANTHER" id="PTHR10177">
    <property type="entry name" value="CYCLINS"/>
    <property type="match status" value="1"/>
</dbReference>
<dbReference type="Pfam" id="PF02984">
    <property type="entry name" value="Cyclin_C"/>
    <property type="match status" value="1"/>
</dbReference>
<dbReference type="Pfam" id="PF00134">
    <property type="entry name" value="Cyclin_N"/>
    <property type="match status" value="1"/>
</dbReference>
<dbReference type="SMART" id="SM00385">
    <property type="entry name" value="CYCLIN"/>
    <property type="match status" value="1"/>
</dbReference>
<dbReference type="SMART" id="SM01332">
    <property type="entry name" value="Cyclin_C"/>
    <property type="match status" value="1"/>
</dbReference>
<dbReference type="SUPFAM" id="SSF47954">
    <property type="entry name" value="Cyclin-like"/>
    <property type="match status" value="2"/>
</dbReference>
<dbReference type="PROSITE" id="PS00292">
    <property type="entry name" value="CYCLINS"/>
    <property type="match status" value="1"/>
</dbReference>
<comment type="function">
    <text evidence="4 5 8 9 10 13 19 21 23 25">Regulatory component of the cyclin D1-CDK4 (DC) complex that phosphorylates and inhibits members of the retinoblastoma (RB) protein family including RB1 and regulates the cell-cycle during G(1)/S transition (PubMed:1827756, PubMed:1833066, PubMed:19412162, PubMed:33854235, PubMed:8114739, PubMed:8302605). Phosphorylation of RB1 allows dissociation of the transcription factor E2F from the RB/E2F complex and the subsequent transcription of E2F target genes which are responsible for the progression through the G(1) phase (PubMed:1827756, PubMed:1833066, PubMed:19412162, PubMed:8114739, PubMed:8302605). Hypophosphorylates RB1 in early G(1) phase (PubMed:1827756, PubMed:1833066, PubMed:19412162, PubMed:8114739, PubMed:8302605). Cyclin D-CDK4 complexes are major integrators of various mitogenenic and antimitogenic signals (PubMed:1827756, PubMed:1833066, PubMed:19412162, PubMed:8302605). Also a substrate for SMAD3, phosphorylating SMAD3 in a cell-cycle-dependent manner and repressing its transcriptional activity (PubMed:15241418). Component of the ternary complex, cyclin D1/CDK4/CDKN1B, required for nuclear translocation and activity of the cyclin D-CDK4 complex (PubMed:9106657). Exhibits transcriptional corepressor activity with INSM1 on the NEUROD1 and INS promoters in a cell cycle-independent manner (PubMed:16569215, PubMed:18417529).</text>
</comment>
<comment type="subunit">
    <text evidence="1 5 10 11 12 14 15 16 21 23 25">Interacts with either CDK4 or CDK6 protein kinase to form a serine/threonine kinase holoenzyme complex (PubMed:19237565, PubMed:8114739). The cyclin subunit imparts substrate specificity to the complex (PubMed:19237565, PubMed:20399237, PubMed:8302605, PubMed:9106657). Component of the ternary complex CCND1/CDK4/CDKN1B required for nuclear translocation and modulation of CDK4-mediated kinase activity (PubMed:9106657). Interacts directly with CDKN1B (By similarity). Can form similar complexes with either CDKN1A or CDKN2A (By similarity). Interacts with UHRF2; the interaction ubiquitinates CCND1 and appears to occur independently of phosphorylation (PubMed:21952639). Interacts with USP2 (PubMed:19917254). Interacts (via cyclin N-terminal domain) with INSM1 (via N-terminal region); the interaction competes with the binding of CCND1 to CDK4 during cell cycle progression and inhibits CDK4 activity (PubMed:16569215, PubMed:18417529, PubMed:19124461). Interacts with CDK4; the interaction is prevented with the binding of CCND1 to INSM1 during cell cycle progression (PubMed:19124461).</text>
</comment>
<comment type="interaction">
    <interactant intactId="EBI-375001">
        <id>P24385</id>
    </interactant>
    <interactant intactId="EBI-608057">
        <id>P10275</id>
        <label>AR</label>
    </interactant>
    <organismsDiffer>false</organismsDiffer>
    <experiments>4</experiments>
</comment>
<comment type="interaction">
    <interactant intactId="EBI-375001">
        <id>P24385</id>
    </interactant>
    <interactant intactId="EBI-349905">
        <id>P38398</id>
        <label>BRCA1</label>
    </interactant>
    <organismsDiffer>false</organismsDiffer>
    <experiments>3</experiments>
</comment>
<comment type="interaction">
    <interactant intactId="EBI-375001">
        <id>P24385</id>
    </interactant>
    <interactant intactId="EBI-994813">
        <id>P30260</id>
        <label>CDC27</label>
    </interactant>
    <organismsDiffer>false</organismsDiffer>
    <experiments>3</experiments>
</comment>
<comment type="interaction">
    <interactant intactId="EBI-375001">
        <id>P24385</id>
    </interactant>
    <interactant intactId="EBI-375096">
        <id>P24941</id>
        <label>CDK2</label>
    </interactant>
    <organismsDiffer>false</organismsDiffer>
    <experiments>8</experiments>
</comment>
<comment type="interaction">
    <interactant intactId="EBI-375001">
        <id>P24385</id>
    </interactant>
    <interactant intactId="EBI-295644">
        <id>P11802</id>
        <label>CDK4</label>
    </interactant>
    <organismsDiffer>false</organismsDiffer>
    <experiments>45</experiments>
</comment>
<comment type="interaction">
    <interactant intactId="EBI-375001">
        <id>P24385</id>
    </interactant>
    <interactant intactId="EBI-295663">
        <id>Q00534</id>
        <label>CDK6</label>
    </interactant>
    <organismsDiffer>false</organismsDiffer>
    <experiments>7</experiments>
</comment>
<comment type="interaction">
    <interactant intactId="EBI-375001">
        <id>P24385</id>
    </interactant>
    <interactant intactId="EBI-375077">
        <id>P38936</id>
        <label>CDKN1A</label>
    </interactant>
    <organismsDiffer>false</organismsDiffer>
    <experiments>25</experiments>
</comment>
<comment type="interaction">
    <interactant intactId="EBI-375001">
        <id>P24385</id>
    </interactant>
    <interactant intactId="EBI-519280">
        <id>P46527</id>
        <label>CDKN1B</label>
    </interactant>
    <organismsDiffer>false</organismsDiffer>
    <experiments>12</experiments>
</comment>
<comment type="interaction">
    <interactant intactId="EBI-375001">
        <id>P24385</id>
    </interactant>
    <interactant intactId="EBI-6162477">
        <id>Q5XUX0</id>
        <label>FBXO31</label>
    </interactant>
    <organismsDiffer>false</organismsDiffer>
    <experiments>4</experiments>
</comment>
<comment type="interaction">
    <interactant intactId="EBI-375001">
        <id>P24385</id>
    </interactant>
    <interactant intactId="EBI-607682">
        <id>O15379</id>
        <label>HDAC3</label>
    </interactant>
    <organismsDiffer>false</organismsDiffer>
    <experiments>3</experiments>
</comment>
<comment type="interaction">
    <interactant intactId="EBI-375001">
        <id>P24385</id>
    </interactant>
    <interactant intactId="EBI-2547810">
        <id>Q16656</id>
        <label>NRF1</label>
    </interactant>
    <organismsDiffer>false</organismsDiffer>
    <experiments>2</experiments>
</comment>
<comment type="interaction">
    <interactant intactId="EBI-375001">
        <id>P24385</id>
    </interactant>
    <interactant intactId="EBI-625304">
        <id>Q96PU4</id>
        <label>UHRF2</label>
    </interactant>
    <organismsDiffer>false</organismsDiffer>
    <experiments>4</experiments>
</comment>
<comment type="interaction">
    <interactant intactId="EBI-375001">
        <id>P24385</id>
    </interactant>
    <interactant intactId="EBI-10201595">
        <id>Q96TE0</id>
    </interactant>
    <organismsDiffer>false</organismsDiffer>
    <experiments>3</experiments>
</comment>
<comment type="interaction">
    <interactant intactId="EBI-375001">
        <id>P24385</id>
    </interactant>
    <interactant intactId="EBI-847225">
        <id>P30285</id>
        <label>Cdk4</label>
    </interactant>
    <organismsDiffer>true</organismsDiffer>
    <experiments>2</experiments>
</comment>
<comment type="interaction">
    <interactant intactId="EBI-375001">
        <id>P24385</id>
    </interactant>
    <interactant intactId="EBI-7602718">
        <id>P59595</id>
        <label>N</label>
    </interactant>
    <organismsDiffer>true</organismsDiffer>
    <experiments>3</experiments>
</comment>
<comment type="interaction">
    <interactant intactId="EBI-375001">
        <id>P24385</id>
    </interactant>
    <interactant intactId="EBI-3956409">
        <id>Q62796</id>
        <label>Ralbp1</label>
    </interactant>
    <organismsDiffer>true</organismsDiffer>
    <experiments>2</experiments>
</comment>
<comment type="subcellular location">
    <subcellularLocation>
        <location evidence="15 17 25">Nucleus</location>
    </subcellularLocation>
    <subcellularLocation>
        <location evidence="17 25">Cytoplasm</location>
    </subcellularLocation>
    <subcellularLocation>
        <location evidence="25">Nucleus membrane</location>
    </subcellularLocation>
    <text evidence="25">Cyclin D-CDK4 complexes accumulate at the nuclear membrane and are then translocated to the nucleus through interaction with KIP/CIP family members.</text>
</comment>
<comment type="PTM">
    <text evidence="3 6 13 18 19 20">Phosphorylation at Thr-286 by MAP kinases is required for ubiquitination and degradation by the DCX(AMBRA1) complex (PubMed:10766840, PubMed:17205132, PubMed:33854232, PubMed:33854235, PubMed:33854239). It also plays an essential role for recognition by the FBXO31 component of SCF (SKP1-cullin-F-box) protein ligase complex following DNA damage (PubMed:19412162).</text>
</comment>
<comment type="PTM">
    <text evidence="3 6 13 14 16 17 18 19 20">Ubiquitinated at Lys-269 by the DCX(AMBRA1) complex during the transition from G1 to S cell phase, leading to its degradation: ubiquitination is dependent on Thr-286 phosphorylation (PubMed:33854232, PubMed:33854235, PubMed:33854239). The DCX(AMBRA1) complex represents the major regulator of CCND1 stability during the G1/S transition (PubMed:33854232, PubMed:33854235, PubMed:33854239). Also ubiquitinated by the SCF(FBXO4) and Cul7-RING(FBXW8) ubiquitin-protein ligase complexes (PubMed:17205132). Following DNA damage it is ubiquitinated by the SCF(FBXO31) protein ligase complex (PubMed:19412162, PubMed:29279382). SCF(FBXO31) ubiquitination is dependent on Thr-286 phosphorylation (PubMed:10766840, PubMed:19412162, PubMed:29279382). Ubiquitinated also by UHRF2 apparently in a phosphorylation-independent manner (PubMed:21952639). Ubiquitination leads to its degradation and G1 arrest. Deubiquitinated by USP2; leading to its stabilization (PubMed:19917254).</text>
</comment>
<comment type="disease">
    <text evidence="7 22 24">A chromosomal aberration involving CCND1 may be a cause of B-lymphocytic malignancy, particularly mantle-cell lymphoma (MCL). Translocation t(11;14)(q13;q32) with immunoglobulin gene regions. Activation of CCND1 may be oncogenic by directly altering progression through the cell cycle.</text>
</comment>
<comment type="disease">
    <text evidence="7">A chromosomal aberration involving CCND1 may be a cause of parathyroid adenomas. Translocation t(11;11)(q13;p15) with the parathyroid hormone (PTH) enhancer.</text>
</comment>
<comment type="disease" evidence="24">
    <disease id="DI-02700">
        <name>Multiple myeloma</name>
        <acronym>MM</acronym>
        <description>A malignant tumor of plasma cells usually arising in the bone marrow and characterized by diffuse involvement of the skeletal system, hyperglobulinemia, Bence-Jones proteinuria and anemia. Complications of multiple myeloma are bone pain, hypercalcemia, renal failure and spinal cord compression. The aberrant antibodies that are produced lead to impaired humoral immunity and patients have a high prevalence of infection. Amyloidosis may develop in some patients. Multiple myeloma is part of a spectrum of diseases ranging from monoclonal gammopathy of unknown significance (MGUS) to plasma cell leukemia.</description>
        <dbReference type="MIM" id="254500"/>
    </disease>
    <text>The gene represented in this entry is involved in disease pathogenesis. A chromosomal aberration involving CCND1 is found in multiple myeloma. Translocation t(11;14)(q13;q32) with the IgH locus.</text>
</comment>
<comment type="similarity">
    <text evidence="29">Belongs to the cyclin family. Cyclin D subfamily.</text>
</comment>
<comment type="online information" name="Atlas of Genetics and Cytogenetics in Oncology and Haematology">
    <link uri="https://atlasgeneticsoncology.org/gene/36/BCL1"/>
</comment>